<accession>Q0C2H9</accession>
<proteinExistence type="inferred from homology"/>
<comment type="similarity">
    <text evidence="1">Belongs to the UPF0262 family.</text>
</comment>
<evidence type="ECO:0000255" key="1">
    <source>
        <dbReference type="HAMAP-Rule" id="MF_00678"/>
    </source>
</evidence>
<feature type="chain" id="PRO_0000314195" description="UPF0262 protein HNE_1347">
    <location>
        <begin position="1"/>
        <end position="162"/>
    </location>
</feature>
<name>Y1347_HYPNA</name>
<protein>
    <recommendedName>
        <fullName evidence="1">UPF0262 protein HNE_1347</fullName>
    </recommendedName>
</protein>
<reference key="1">
    <citation type="journal article" date="2006" name="J. Bacteriol.">
        <title>Comparative genomic evidence for a close relationship between the dimorphic prosthecate bacteria Hyphomonas neptunium and Caulobacter crescentus.</title>
        <authorList>
            <person name="Badger J.H."/>
            <person name="Hoover T.R."/>
            <person name="Brun Y.V."/>
            <person name="Weiner R.M."/>
            <person name="Laub M.T."/>
            <person name="Alexandre G."/>
            <person name="Mrazek J."/>
            <person name="Ren Q."/>
            <person name="Paulsen I.T."/>
            <person name="Nelson K.E."/>
            <person name="Khouri H.M."/>
            <person name="Radune D."/>
            <person name="Sosa J."/>
            <person name="Dodson R.J."/>
            <person name="Sullivan S.A."/>
            <person name="Rosovitz M.J."/>
            <person name="Madupu R."/>
            <person name="Brinkac L.M."/>
            <person name="Durkin A.S."/>
            <person name="Daugherty S.C."/>
            <person name="Kothari S.P."/>
            <person name="Giglio M.G."/>
            <person name="Zhou L."/>
            <person name="Haft D.H."/>
            <person name="Selengut J.D."/>
            <person name="Davidsen T.M."/>
            <person name="Yang Q."/>
            <person name="Zafar N."/>
            <person name="Ward N.L."/>
        </authorList>
    </citation>
    <scope>NUCLEOTIDE SEQUENCE [LARGE SCALE GENOMIC DNA]</scope>
    <source>
        <strain>ATCC 15444</strain>
    </source>
</reference>
<organism>
    <name type="scientific">Hyphomonas neptunium (strain ATCC 15444)</name>
    <dbReference type="NCBI Taxonomy" id="228405"/>
    <lineage>
        <taxon>Bacteria</taxon>
        <taxon>Pseudomonadati</taxon>
        <taxon>Pseudomonadota</taxon>
        <taxon>Alphaproteobacteria</taxon>
        <taxon>Hyphomonadales</taxon>
        <taxon>Hyphomonadaceae</taxon>
        <taxon>Hyphomonas</taxon>
    </lineage>
</organism>
<dbReference type="EMBL" id="CP000158">
    <property type="protein sequence ID" value="ABI78788.1"/>
    <property type="molecule type" value="Genomic_DNA"/>
</dbReference>
<dbReference type="RefSeq" id="WP_011646364.1">
    <property type="nucleotide sequence ID" value="NC_008358.1"/>
</dbReference>
<dbReference type="STRING" id="228405.HNE_1347"/>
<dbReference type="KEGG" id="hne:HNE_1347"/>
<dbReference type="eggNOG" id="COG5328">
    <property type="taxonomic scope" value="Bacteria"/>
</dbReference>
<dbReference type="HOGENOM" id="CLU_112904_0_0_5"/>
<dbReference type="Proteomes" id="UP000001959">
    <property type="component" value="Chromosome"/>
</dbReference>
<dbReference type="HAMAP" id="MF_00678">
    <property type="entry name" value="UPF0262"/>
    <property type="match status" value="1"/>
</dbReference>
<dbReference type="InterPro" id="IPR008321">
    <property type="entry name" value="UCP032146"/>
</dbReference>
<dbReference type="NCBIfam" id="NF002769">
    <property type="entry name" value="PRK02853.1"/>
    <property type="match status" value="1"/>
</dbReference>
<dbReference type="Pfam" id="PF06793">
    <property type="entry name" value="UPF0262"/>
    <property type="match status" value="1"/>
</dbReference>
<dbReference type="PIRSF" id="PIRSF032146">
    <property type="entry name" value="UCP032146"/>
    <property type="match status" value="1"/>
</dbReference>
<sequence>MGANRLVAVHIDEETLGASGPDAEHERRVAIFDLIEENTFGVIGEDRGPYVLALSQHERRLVFAIRTEPGEEVHTFILSLSPFRGVIRDYFTICDSYYEAIRMSTPHQIEAIDMARRGIHNEGSELLKERLEGKIDIDFHTARRLFTLICALHAGQGRAPGA</sequence>
<keyword id="KW-1185">Reference proteome</keyword>
<gene>
    <name type="ordered locus">HNE_1347</name>
</gene>